<feature type="chain" id="PRO_1000205041" description="V-type ATP synthase beta chain">
    <location>
        <begin position="1"/>
        <end position="471"/>
    </location>
</feature>
<organism>
    <name type="scientific">Deinococcus deserti (strain DSM 17065 / CIP 109153 / LMG 22923 / VCD115)</name>
    <dbReference type="NCBI Taxonomy" id="546414"/>
    <lineage>
        <taxon>Bacteria</taxon>
        <taxon>Thermotogati</taxon>
        <taxon>Deinococcota</taxon>
        <taxon>Deinococci</taxon>
        <taxon>Deinococcales</taxon>
        <taxon>Deinococcaceae</taxon>
        <taxon>Deinococcus</taxon>
    </lineage>
</organism>
<evidence type="ECO:0000255" key="1">
    <source>
        <dbReference type="HAMAP-Rule" id="MF_00310"/>
    </source>
</evidence>
<dbReference type="EMBL" id="CP001114">
    <property type="protein sequence ID" value="ACO44900.1"/>
    <property type="molecule type" value="Genomic_DNA"/>
</dbReference>
<dbReference type="RefSeq" id="WP_012692023.1">
    <property type="nucleotide sequence ID" value="NC_012526.1"/>
</dbReference>
<dbReference type="SMR" id="C1CXU4"/>
<dbReference type="STRING" id="546414.Deide_01000"/>
<dbReference type="PaxDb" id="546414-Deide_01000"/>
<dbReference type="KEGG" id="ddr:Deide_01000"/>
<dbReference type="eggNOG" id="COG1156">
    <property type="taxonomic scope" value="Bacteria"/>
</dbReference>
<dbReference type="HOGENOM" id="CLU_022916_0_0_0"/>
<dbReference type="OrthoDB" id="9802718at2"/>
<dbReference type="Proteomes" id="UP000002208">
    <property type="component" value="Chromosome"/>
</dbReference>
<dbReference type="GO" id="GO:0005524">
    <property type="term" value="F:ATP binding"/>
    <property type="evidence" value="ECO:0007669"/>
    <property type="project" value="UniProtKB-UniRule"/>
</dbReference>
<dbReference type="GO" id="GO:0046933">
    <property type="term" value="F:proton-transporting ATP synthase activity, rotational mechanism"/>
    <property type="evidence" value="ECO:0007669"/>
    <property type="project" value="UniProtKB-UniRule"/>
</dbReference>
<dbReference type="GO" id="GO:0042777">
    <property type="term" value="P:proton motive force-driven plasma membrane ATP synthesis"/>
    <property type="evidence" value="ECO:0007669"/>
    <property type="project" value="UniProtKB-UniRule"/>
</dbReference>
<dbReference type="CDD" id="cd18112">
    <property type="entry name" value="ATP-synt_V_A-type_beta_C"/>
    <property type="match status" value="1"/>
</dbReference>
<dbReference type="CDD" id="cd18118">
    <property type="entry name" value="ATP-synt_V_A-type_beta_N"/>
    <property type="match status" value="1"/>
</dbReference>
<dbReference type="CDD" id="cd01135">
    <property type="entry name" value="V_A-ATPase_B"/>
    <property type="match status" value="1"/>
</dbReference>
<dbReference type="Gene3D" id="3.40.50.12240">
    <property type="match status" value="1"/>
</dbReference>
<dbReference type="HAMAP" id="MF_00310">
    <property type="entry name" value="ATP_synth_B_arch"/>
    <property type="match status" value="1"/>
</dbReference>
<dbReference type="InterPro" id="IPR055190">
    <property type="entry name" value="ATP-synt_VA_C"/>
</dbReference>
<dbReference type="InterPro" id="IPR020003">
    <property type="entry name" value="ATPase_a/bsu_AS"/>
</dbReference>
<dbReference type="InterPro" id="IPR004100">
    <property type="entry name" value="ATPase_F1/V1/A1_a/bsu_N"/>
</dbReference>
<dbReference type="InterPro" id="IPR000194">
    <property type="entry name" value="ATPase_F1/V1/A1_a/bsu_nucl-bd"/>
</dbReference>
<dbReference type="InterPro" id="IPR027417">
    <property type="entry name" value="P-loop_NTPase"/>
</dbReference>
<dbReference type="InterPro" id="IPR022879">
    <property type="entry name" value="V-ATPase_su_B/beta"/>
</dbReference>
<dbReference type="NCBIfam" id="NF003235">
    <property type="entry name" value="PRK04196.1"/>
    <property type="match status" value="1"/>
</dbReference>
<dbReference type="PANTHER" id="PTHR43389">
    <property type="entry name" value="V-TYPE PROTON ATPASE SUBUNIT B"/>
    <property type="match status" value="1"/>
</dbReference>
<dbReference type="PANTHER" id="PTHR43389:SF4">
    <property type="entry name" value="V-TYPE PROTON ATPASE SUBUNIT B"/>
    <property type="match status" value="1"/>
</dbReference>
<dbReference type="Pfam" id="PF00006">
    <property type="entry name" value="ATP-synt_ab"/>
    <property type="match status" value="1"/>
</dbReference>
<dbReference type="Pfam" id="PF02874">
    <property type="entry name" value="ATP-synt_ab_N"/>
    <property type="match status" value="1"/>
</dbReference>
<dbReference type="Pfam" id="PF22919">
    <property type="entry name" value="ATP-synt_VA_C"/>
    <property type="match status" value="1"/>
</dbReference>
<dbReference type="PIRSF" id="PIRSF039114">
    <property type="entry name" value="V-ATPsynth_beta/V-ATPase_B"/>
    <property type="match status" value="1"/>
</dbReference>
<dbReference type="SUPFAM" id="SSF47917">
    <property type="entry name" value="C-terminal domain of alpha and beta subunits of F1 ATP synthase"/>
    <property type="match status" value="1"/>
</dbReference>
<dbReference type="SUPFAM" id="SSF52540">
    <property type="entry name" value="P-loop containing nucleoside triphosphate hydrolases"/>
    <property type="match status" value="1"/>
</dbReference>
<dbReference type="PROSITE" id="PS00152">
    <property type="entry name" value="ATPASE_ALPHA_BETA"/>
    <property type="match status" value="1"/>
</dbReference>
<proteinExistence type="inferred from homology"/>
<comment type="function">
    <text evidence="1">Produces ATP from ADP in the presence of a proton gradient across the membrane. The V-type beta chain is a regulatory subunit.</text>
</comment>
<comment type="similarity">
    <text evidence="1">Belongs to the ATPase alpha/beta chains family.</text>
</comment>
<accession>C1CXU4</accession>
<keyword id="KW-0066">ATP synthesis</keyword>
<keyword id="KW-0375">Hydrogen ion transport</keyword>
<keyword id="KW-0406">Ion transport</keyword>
<keyword id="KW-1185">Reference proteome</keyword>
<keyword id="KW-0813">Transport</keyword>
<reference key="1">
    <citation type="journal article" date="2009" name="PLoS Genet.">
        <title>Alliance of proteomics and genomics to unravel the specificities of Sahara bacterium Deinococcus deserti.</title>
        <authorList>
            <person name="de Groot A."/>
            <person name="Dulermo R."/>
            <person name="Ortet P."/>
            <person name="Blanchard L."/>
            <person name="Guerin P."/>
            <person name="Fernandez B."/>
            <person name="Vacherie B."/>
            <person name="Dossat C."/>
            <person name="Jolivet E."/>
            <person name="Siguier P."/>
            <person name="Chandler M."/>
            <person name="Barakat M."/>
            <person name="Dedieu A."/>
            <person name="Barbe V."/>
            <person name="Heulin T."/>
            <person name="Sommer S."/>
            <person name="Achouak W."/>
            <person name="Armengaud J."/>
        </authorList>
    </citation>
    <scope>NUCLEOTIDE SEQUENCE [LARGE SCALE GENOMIC DNA]</scope>
    <source>
        <strain>DSM 17065 / CIP 109153 / LMG 22923 / VCD115</strain>
    </source>
</reference>
<sequence length="471" mass="51388">MTLLQKEYNDVAYISGPLLFVNAASDLAYGAIVNIKDASGRSRGGQVISVTDQNAVIQVFEETRGLDLATASVSLVEDVARLGVSKEMIGRRFDGLGRPIDGLPQVVAEQRLSINGQAMNPAARAKPEEFIQTGISTIDVQTSLIRGQKLPIFSGSGLPHNELAAQIARQAKVPGHEGDFAVVFAAMGLTQREVSFFTQEFERTGALARSVLFLNKADDPAVERLLTPRMALTTAEYLAFEHGYHVLVILTDLTNYCEALREIGGAREEIPGRRGFPGYMYTDLASLYERAGVVEGKPGSVTQVPILSMPDDDITHPIPDLTGYITEGQIVVDRTLNSKGVFPPINPLPSLSRLQGNGIGKGKTRADHKNISDQLFAAYANGLDLRKLVAITGEDALTETDKLYLRFADDFEQYFIGQGDQDRSIDDSLTVAWGILSKLPQSQLTRISKDAIDKYYGTKMDEMWKGSRSLG</sequence>
<name>VATB_DEIDV</name>
<gene>
    <name evidence="1" type="primary">atpB</name>
    <name type="ordered locus">Deide_01000</name>
</gene>
<protein>
    <recommendedName>
        <fullName evidence="1">V-type ATP synthase beta chain</fullName>
    </recommendedName>
    <alternativeName>
        <fullName evidence="1">V-ATPase subunit B</fullName>
    </alternativeName>
</protein>